<name>RL31B_PSEAB</name>
<reference key="1">
    <citation type="journal article" date="2006" name="Genome Biol.">
        <title>Genomic analysis reveals that Pseudomonas aeruginosa virulence is combinatorial.</title>
        <authorList>
            <person name="Lee D.G."/>
            <person name="Urbach J.M."/>
            <person name="Wu G."/>
            <person name="Liberati N.T."/>
            <person name="Feinbaum R.L."/>
            <person name="Miyata S."/>
            <person name="Diggins L.T."/>
            <person name="He J."/>
            <person name="Saucier M."/>
            <person name="Deziel E."/>
            <person name="Friedman L."/>
            <person name="Li L."/>
            <person name="Grills G."/>
            <person name="Montgomery K."/>
            <person name="Kucherlapati R."/>
            <person name="Rahme L.G."/>
            <person name="Ausubel F.M."/>
        </authorList>
    </citation>
    <scope>NUCLEOTIDE SEQUENCE [LARGE SCALE GENOMIC DNA]</scope>
    <source>
        <strain>UCBPP-PA14</strain>
    </source>
</reference>
<feature type="chain" id="PRO_1000014711" description="Large ribosomal subunit protein bL31B">
    <location>
        <begin position="1"/>
        <end position="87"/>
    </location>
</feature>
<keyword id="KW-0687">Ribonucleoprotein</keyword>
<keyword id="KW-0689">Ribosomal protein</keyword>
<sequence>MKPGIHPEYRPVLFHDTSADVYFLIGSTAETDKTHTHTDGKTYPYVTLDVSSASHPVYTGEQRKTKSEGRVAGFNKRFAGFVGGKGA</sequence>
<comment type="subunit">
    <text evidence="1">Part of the 50S ribosomal subunit.</text>
</comment>
<comment type="similarity">
    <text evidence="1">Belongs to the bacterial ribosomal protein bL31 family. Type B subfamily.</text>
</comment>
<proteinExistence type="inferred from homology"/>
<gene>
    <name evidence="1" type="primary">rpmE2</name>
    <name type="ordered locus">PA14_17700</name>
</gene>
<organism>
    <name type="scientific">Pseudomonas aeruginosa (strain UCBPP-PA14)</name>
    <dbReference type="NCBI Taxonomy" id="208963"/>
    <lineage>
        <taxon>Bacteria</taxon>
        <taxon>Pseudomonadati</taxon>
        <taxon>Pseudomonadota</taxon>
        <taxon>Gammaproteobacteria</taxon>
        <taxon>Pseudomonadales</taxon>
        <taxon>Pseudomonadaceae</taxon>
        <taxon>Pseudomonas</taxon>
    </lineage>
</organism>
<evidence type="ECO:0000255" key="1">
    <source>
        <dbReference type="HAMAP-Rule" id="MF_00502"/>
    </source>
</evidence>
<evidence type="ECO:0000305" key="2"/>
<accession>Q02R73</accession>
<protein>
    <recommendedName>
        <fullName evidence="1">Large ribosomal subunit protein bL31B</fullName>
    </recommendedName>
    <alternativeName>
        <fullName evidence="2">50S ribosomal protein L31 type B</fullName>
    </alternativeName>
</protein>
<dbReference type="EMBL" id="CP000438">
    <property type="protein sequence ID" value="ABJ12835.1"/>
    <property type="molecule type" value="Genomic_DNA"/>
</dbReference>
<dbReference type="RefSeq" id="WP_003092213.1">
    <property type="nucleotide sequence ID" value="NZ_CP034244.1"/>
</dbReference>
<dbReference type="SMR" id="Q02R73"/>
<dbReference type="KEGG" id="pau:PA14_17700"/>
<dbReference type="PseudoCAP" id="PA14_17700"/>
<dbReference type="HOGENOM" id="CLU_114306_2_2_6"/>
<dbReference type="BioCyc" id="PAER208963:G1G74-1461-MONOMER"/>
<dbReference type="Proteomes" id="UP000000653">
    <property type="component" value="Chromosome"/>
</dbReference>
<dbReference type="GO" id="GO:1990904">
    <property type="term" value="C:ribonucleoprotein complex"/>
    <property type="evidence" value="ECO:0007669"/>
    <property type="project" value="UniProtKB-KW"/>
</dbReference>
<dbReference type="GO" id="GO:0005840">
    <property type="term" value="C:ribosome"/>
    <property type="evidence" value="ECO:0007669"/>
    <property type="project" value="UniProtKB-KW"/>
</dbReference>
<dbReference type="GO" id="GO:0003735">
    <property type="term" value="F:structural constituent of ribosome"/>
    <property type="evidence" value="ECO:0007669"/>
    <property type="project" value="InterPro"/>
</dbReference>
<dbReference type="GO" id="GO:0006412">
    <property type="term" value="P:translation"/>
    <property type="evidence" value="ECO:0007669"/>
    <property type="project" value="UniProtKB-UniRule"/>
</dbReference>
<dbReference type="Gene3D" id="4.10.830.30">
    <property type="entry name" value="Ribosomal protein L31"/>
    <property type="match status" value="1"/>
</dbReference>
<dbReference type="HAMAP" id="MF_00502">
    <property type="entry name" value="Ribosomal_bL31_2"/>
    <property type="match status" value="1"/>
</dbReference>
<dbReference type="InterPro" id="IPR034704">
    <property type="entry name" value="Ribosomal_bL28/bL31-like_sf"/>
</dbReference>
<dbReference type="InterPro" id="IPR002150">
    <property type="entry name" value="Ribosomal_bL31"/>
</dbReference>
<dbReference type="InterPro" id="IPR027493">
    <property type="entry name" value="Ribosomal_bL31_B"/>
</dbReference>
<dbReference type="InterPro" id="IPR042105">
    <property type="entry name" value="Ribosomal_bL31_sf"/>
</dbReference>
<dbReference type="NCBIfam" id="TIGR00105">
    <property type="entry name" value="L31"/>
    <property type="match status" value="1"/>
</dbReference>
<dbReference type="NCBIfam" id="NF002462">
    <property type="entry name" value="PRK01678.1"/>
    <property type="match status" value="1"/>
</dbReference>
<dbReference type="PANTHER" id="PTHR33280">
    <property type="entry name" value="50S RIBOSOMAL PROTEIN L31, CHLOROPLASTIC"/>
    <property type="match status" value="1"/>
</dbReference>
<dbReference type="PANTHER" id="PTHR33280:SF1">
    <property type="entry name" value="LARGE RIBOSOMAL SUBUNIT PROTEIN BL31C"/>
    <property type="match status" value="1"/>
</dbReference>
<dbReference type="Pfam" id="PF01197">
    <property type="entry name" value="Ribosomal_L31"/>
    <property type="match status" value="1"/>
</dbReference>
<dbReference type="PRINTS" id="PR01249">
    <property type="entry name" value="RIBOSOMALL31"/>
</dbReference>
<dbReference type="SUPFAM" id="SSF143800">
    <property type="entry name" value="L28p-like"/>
    <property type="match status" value="1"/>
</dbReference>
<dbReference type="PROSITE" id="PS01143">
    <property type="entry name" value="RIBOSOMAL_L31"/>
    <property type="match status" value="1"/>
</dbReference>